<proteinExistence type="inferred from homology"/>
<comment type="function">
    <text evidence="1">Catalyzes the reversible phosphorylation of UMP to UDP.</text>
</comment>
<comment type="catalytic activity">
    <reaction evidence="1">
        <text>UMP + ATP = UDP + ADP</text>
        <dbReference type="Rhea" id="RHEA:24400"/>
        <dbReference type="ChEBI" id="CHEBI:30616"/>
        <dbReference type="ChEBI" id="CHEBI:57865"/>
        <dbReference type="ChEBI" id="CHEBI:58223"/>
        <dbReference type="ChEBI" id="CHEBI:456216"/>
        <dbReference type="EC" id="2.7.4.22"/>
    </reaction>
</comment>
<comment type="activity regulation">
    <text evidence="1">Inhibited by UTP.</text>
</comment>
<comment type="pathway">
    <text evidence="1">Pyrimidine metabolism; CTP biosynthesis via de novo pathway; UDP from UMP (UMPK route): step 1/1.</text>
</comment>
<comment type="subunit">
    <text evidence="1">Homohexamer.</text>
</comment>
<comment type="subcellular location">
    <subcellularLocation>
        <location evidence="1">Cytoplasm</location>
    </subcellularLocation>
</comment>
<comment type="similarity">
    <text evidence="1">Belongs to the UMP kinase family.</text>
</comment>
<comment type="sequence caution" evidence="2">
    <conflict type="erroneous initiation">
        <sequence resource="EMBL-CDS" id="ABQ90403"/>
    </conflict>
</comment>
<dbReference type="EC" id="2.7.4.22" evidence="1"/>
<dbReference type="EMBL" id="CP000686">
    <property type="protein sequence ID" value="ABQ90403.1"/>
    <property type="status" value="ALT_INIT"/>
    <property type="molecule type" value="Genomic_DNA"/>
</dbReference>
<dbReference type="RefSeq" id="WP_041333457.1">
    <property type="nucleotide sequence ID" value="NC_009523.1"/>
</dbReference>
<dbReference type="SMR" id="A5UUV0"/>
<dbReference type="STRING" id="357808.RoseRS_2017"/>
<dbReference type="KEGG" id="rrs:RoseRS_2017"/>
<dbReference type="eggNOG" id="COG0528">
    <property type="taxonomic scope" value="Bacteria"/>
</dbReference>
<dbReference type="HOGENOM" id="CLU_033861_0_0_0"/>
<dbReference type="OrthoDB" id="9807458at2"/>
<dbReference type="UniPathway" id="UPA00159">
    <property type="reaction ID" value="UER00275"/>
</dbReference>
<dbReference type="Proteomes" id="UP000006554">
    <property type="component" value="Chromosome"/>
</dbReference>
<dbReference type="GO" id="GO:0005737">
    <property type="term" value="C:cytoplasm"/>
    <property type="evidence" value="ECO:0007669"/>
    <property type="project" value="UniProtKB-SubCell"/>
</dbReference>
<dbReference type="GO" id="GO:0005524">
    <property type="term" value="F:ATP binding"/>
    <property type="evidence" value="ECO:0007669"/>
    <property type="project" value="UniProtKB-KW"/>
</dbReference>
<dbReference type="GO" id="GO:0033862">
    <property type="term" value="F:UMP kinase activity"/>
    <property type="evidence" value="ECO:0007669"/>
    <property type="project" value="UniProtKB-EC"/>
</dbReference>
<dbReference type="GO" id="GO:0044210">
    <property type="term" value="P:'de novo' CTP biosynthetic process"/>
    <property type="evidence" value="ECO:0007669"/>
    <property type="project" value="UniProtKB-UniRule"/>
</dbReference>
<dbReference type="GO" id="GO:0006225">
    <property type="term" value="P:UDP biosynthetic process"/>
    <property type="evidence" value="ECO:0007669"/>
    <property type="project" value="TreeGrafter"/>
</dbReference>
<dbReference type="CDD" id="cd04254">
    <property type="entry name" value="AAK_UMPK-PyrH-Ec"/>
    <property type="match status" value="1"/>
</dbReference>
<dbReference type="FunFam" id="3.40.1160.10:FF:000001">
    <property type="entry name" value="Uridylate kinase"/>
    <property type="match status" value="1"/>
</dbReference>
<dbReference type="Gene3D" id="3.40.1160.10">
    <property type="entry name" value="Acetylglutamate kinase-like"/>
    <property type="match status" value="1"/>
</dbReference>
<dbReference type="HAMAP" id="MF_01220_B">
    <property type="entry name" value="PyrH_B"/>
    <property type="match status" value="1"/>
</dbReference>
<dbReference type="InterPro" id="IPR036393">
    <property type="entry name" value="AceGlu_kinase-like_sf"/>
</dbReference>
<dbReference type="InterPro" id="IPR001048">
    <property type="entry name" value="Asp/Glu/Uridylate_kinase"/>
</dbReference>
<dbReference type="InterPro" id="IPR011817">
    <property type="entry name" value="Uridylate_kinase"/>
</dbReference>
<dbReference type="InterPro" id="IPR015963">
    <property type="entry name" value="Uridylate_kinase_bac"/>
</dbReference>
<dbReference type="NCBIfam" id="TIGR02075">
    <property type="entry name" value="pyrH_bact"/>
    <property type="match status" value="1"/>
</dbReference>
<dbReference type="PANTHER" id="PTHR42833">
    <property type="entry name" value="URIDYLATE KINASE"/>
    <property type="match status" value="1"/>
</dbReference>
<dbReference type="PANTHER" id="PTHR42833:SF4">
    <property type="entry name" value="URIDYLATE KINASE PUMPKIN, CHLOROPLASTIC"/>
    <property type="match status" value="1"/>
</dbReference>
<dbReference type="Pfam" id="PF00696">
    <property type="entry name" value="AA_kinase"/>
    <property type="match status" value="1"/>
</dbReference>
<dbReference type="PIRSF" id="PIRSF005650">
    <property type="entry name" value="Uridylate_kin"/>
    <property type="match status" value="1"/>
</dbReference>
<dbReference type="SUPFAM" id="SSF53633">
    <property type="entry name" value="Carbamate kinase-like"/>
    <property type="match status" value="1"/>
</dbReference>
<protein>
    <recommendedName>
        <fullName evidence="1">Uridylate kinase</fullName>
        <shortName evidence="1">UK</shortName>
        <ecNumber evidence="1">2.7.4.22</ecNumber>
    </recommendedName>
    <alternativeName>
        <fullName evidence="1">Uridine monophosphate kinase</fullName>
        <shortName evidence="1">UMP kinase</shortName>
        <shortName evidence="1">UMPK</shortName>
    </alternativeName>
</protein>
<gene>
    <name evidence="1" type="primary">pyrH</name>
    <name type="ordered locus">RoseRS_2017</name>
</gene>
<keyword id="KW-0067">ATP-binding</keyword>
<keyword id="KW-0963">Cytoplasm</keyword>
<keyword id="KW-0418">Kinase</keyword>
<keyword id="KW-0547">Nucleotide-binding</keyword>
<keyword id="KW-0665">Pyrimidine biosynthesis</keyword>
<keyword id="KW-0808">Transferase</keyword>
<evidence type="ECO:0000255" key="1">
    <source>
        <dbReference type="HAMAP-Rule" id="MF_01220"/>
    </source>
</evidence>
<evidence type="ECO:0000305" key="2"/>
<feature type="chain" id="PRO_0000323945" description="Uridylate kinase">
    <location>
        <begin position="1"/>
        <end position="243"/>
    </location>
</feature>
<feature type="binding site" evidence="1">
    <location>
        <begin position="12"/>
        <end position="15"/>
    </location>
    <ligand>
        <name>ATP</name>
        <dbReference type="ChEBI" id="CHEBI:30616"/>
    </ligand>
</feature>
<feature type="binding site" evidence="1">
    <location>
        <position position="54"/>
    </location>
    <ligand>
        <name>UMP</name>
        <dbReference type="ChEBI" id="CHEBI:57865"/>
    </ligand>
</feature>
<feature type="binding site" evidence="1">
    <location>
        <position position="55"/>
    </location>
    <ligand>
        <name>ATP</name>
        <dbReference type="ChEBI" id="CHEBI:30616"/>
    </ligand>
</feature>
<feature type="binding site" evidence="1">
    <location>
        <position position="59"/>
    </location>
    <ligand>
        <name>ATP</name>
        <dbReference type="ChEBI" id="CHEBI:30616"/>
    </ligand>
</feature>
<feature type="binding site" evidence="1">
    <location>
        <begin position="135"/>
        <end position="142"/>
    </location>
    <ligand>
        <name>UMP</name>
        <dbReference type="ChEBI" id="CHEBI:57865"/>
    </ligand>
</feature>
<feature type="binding site" evidence="1">
    <location>
        <position position="163"/>
    </location>
    <ligand>
        <name>ATP</name>
        <dbReference type="ChEBI" id="CHEBI:30616"/>
    </ligand>
</feature>
<feature type="binding site" evidence="1">
    <location>
        <position position="169"/>
    </location>
    <ligand>
        <name>ATP</name>
        <dbReference type="ChEBI" id="CHEBI:30616"/>
    </ligand>
</feature>
<feature type="binding site" evidence="1">
    <location>
        <position position="172"/>
    </location>
    <ligand>
        <name>ATP</name>
        <dbReference type="ChEBI" id="CHEBI:30616"/>
    </ligand>
</feature>
<reference key="1">
    <citation type="submission" date="2007-04" db="EMBL/GenBank/DDBJ databases">
        <title>Complete sequence of Roseiflexus sp. RS-1.</title>
        <authorList>
            <consortium name="US DOE Joint Genome Institute"/>
            <person name="Copeland A."/>
            <person name="Lucas S."/>
            <person name="Lapidus A."/>
            <person name="Barry K."/>
            <person name="Detter J.C."/>
            <person name="Glavina del Rio T."/>
            <person name="Hammon N."/>
            <person name="Israni S."/>
            <person name="Dalin E."/>
            <person name="Tice H."/>
            <person name="Pitluck S."/>
            <person name="Chertkov O."/>
            <person name="Brettin T."/>
            <person name="Bruce D."/>
            <person name="Han C."/>
            <person name="Schmutz J."/>
            <person name="Larimer F."/>
            <person name="Land M."/>
            <person name="Hauser L."/>
            <person name="Kyrpides N."/>
            <person name="Mikhailova N."/>
            <person name="Bryant D.A."/>
            <person name="Richardson P."/>
        </authorList>
    </citation>
    <scope>NUCLEOTIDE SEQUENCE [LARGE SCALE GENOMIC DNA]</scope>
    <source>
        <strain>RS-1</strain>
    </source>
</reference>
<sequence length="243" mass="26784">MAEPRYRRILLKLSGEALAGKGTHSIDPNMLDYYAEEIERVHRHGVQVAVVLGGGNIWRGNQAIARGMDAAQSHYMGMLATIINALALQDALERRGIFTRAMTAIKMDEVAEPYIRRRATRHLEKGRVIILAAGTGNPYFTTDSAAALRAAEVHAEVILMAKNGVDGVYSADPRRYPDAKRFEYISYMEALSRGLTVMDSTALTFCMDNNIPIIVFDPLTPGNIERIVMGEHVGTLVSSHPSQ</sequence>
<name>PYRH_ROSS1</name>
<accession>A5UUV0</accession>
<organism>
    <name type="scientific">Roseiflexus sp. (strain RS-1)</name>
    <dbReference type="NCBI Taxonomy" id="357808"/>
    <lineage>
        <taxon>Bacteria</taxon>
        <taxon>Bacillati</taxon>
        <taxon>Chloroflexota</taxon>
        <taxon>Chloroflexia</taxon>
        <taxon>Chloroflexales</taxon>
        <taxon>Roseiflexineae</taxon>
        <taxon>Roseiflexaceae</taxon>
        <taxon>Roseiflexus</taxon>
    </lineage>
</organism>